<evidence type="ECO:0000255" key="1">
    <source>
        <dbReference type="HAMAP-Rule" id="MF_00052"/>
    </source>
</evidence>
<evidence type="ECO:0000255" key="2">
    <source>
        <dbReference type="PROSITE-ProRule" id="PRU01319"/>
    </source>
</evidence>
<keyword id="KW-0963">Cytoplasm</keyword>
<keyword id="KW-0255">Endonuclease</keyword>
<keyword id="KW-0378">Hydrolase</keyword>
<keyword id="KW-0464">Manganese</keyword>
<keyword id="KW-0479">Metal-binding</keyword>
<keyword id="KW-0540">Nuclease</keyword>
<proteinExistence type="inferred from homology"/>
<gene>
    <name evidence="1" type="primary">rnhB</name>
    <name type="ordered locus">BDU_50</name>
</gene>
<protein>
    <recommendedName>
        <fullName evidence="1">Ribonuclease HII</fullName>
        <shortName evidence="1">RNase HII</shortName>
        <ecNumber evidence="1">3.1.26.4</ecNumber>
    </recommendedName>
</protein>
<name>RNH2_BORDL</name>
<accession>B5RKU7</accession>
<organism>
    <name type="scientific">Borrelia duttonii (strain Ly)</name>
    <dbReference type="NCBI Taxonomy" id="412419"/>
    <lineage>
        <taxon>Bacteria</taxon>
        <taxon>Pseudomonadati</taxon>
        <taxon>Spirochaetota</taxon>
        <taxon>Spirochaetia</taxon>
        <taxon>Spirochaetales</taxon>
        <taxon>Borreliaceae</taxon>
        <taxon>Borrelia</taxon>
    </lineage>
</organism>
<reference key="1">
    <citation type="journal article" date="2008" name="PLoS Genet.">
        <title>The genome of Borrelia recurrentis, the agent of deadly louse-borne relapsing fever, is a degraded subset of tick-borne Borrelia duttonii.</title>
        <authorList>
            <person name="Lescot M."/>
            <person name="Audic S."/>
            <person name="Robert C."/>
            <person name="Nguyen T.T."/>
            <person name="Blanc G."/>
            <person name="Cutler S.J."/>
            <person name="Wincker P."/>
            <person name="Couloux A."/>
            <person name="Claverie J.-M."/>
            <person name="Raoult D."/>
            <person name="Drancourt M."/>
        </authorList>
    </citation>
    <scope>NUCLEOTIDE SEQUENCE [LARGE SCALE GENOMIC DNA]</scope>
    <source>
        <strain>Ly</strain>
    </source>
</reference>
<sequence>MICGIDEVGRGCIFGPVLSAAVIFKSKPNFLNELDDSKKLTKTKREYLSALILENAYYAFADISNEIIDKINIHNASLLAMQIAYQKLNIECNLVLVDGKFIPKIQAKQIRAIIKGDSMIDEIKAASIIAKVQRDKLMVEYDKIYPLYGLKKNKGYPTKEHKDAIKKHGILSLHRKSFQLI</sequence>
<dbReference type="EC" id="3.1.26.4" evidence="1"/>
<dbReference type="EMBL" id="CP000976">
    <property type="protein sequence ID" value="ACH93008.1"/>
    <property type="molecule type" value="Genomic_DNA"/>
</dbReference>
<dbReference type="RefSeq" id="WP_012537820.1">
    <property type="nucleotide sequence ID" value="NC_011229.1"/>
</dbReference>
<dbReference type="SMR" id="B5RKU7"/>
<dbReference type="STRING" id="412419.BDU_50"/>
<dbReference type="KEGG" id="bdu:BDU_50"/>
<dbReference type="eggNOG" id="COG0164">
    <property type="taxonomic scope" value="Bacteria"/>
</dbReference>
<dbReference type="HOGENOM" id="CLU_036532_3_1_12"/>
<dbReference type="OrthoDB" id="9803420at2"/>
<dbReference type="Proteomes" id="UP000000611">
    <property type="component" value="Chromosome"/>
</dbReference>
<dbReference type="GO" id="GO:0005737">
    <property type="term" value="C:cytoplasm"/>
    <property type="evidence" value="ECO:0007669"/>
    <property type="project" value="UniProtKB-SubCell"/>
</dbReference>
<dbReference type="GO" id="GO:0032299">
    <property type="term" value="C:ribonuclease H2 complex"/>
    <property type="evidence" value="ECO:0007669"/>
    <property type="project" value="TreeGrafter"/>
</dbReference>
<dbReference type="GO" id="GO:0030145">
    <property type="term" value="F:manganese ion binding"/>
    <property type="evidence" value="ECO:0007669"/>
    <property type="project" value="UniProtKB-UniRule"/>
</dbReference>
<dbReference type="GO" id="GO:0003723">
    <property type="term" value="F:RNA binding"/>
    <property type="evidence" value="ECO:0007669"/>
    <property type="project" value="InterPro"/>
</dbReference>
<dbReference type="GO" id="GO:0004523">
    <property type="term" value="F:RNA-DNA hybrid ribonuclease activity"/>
    <property type="evidence" value="ECO:0007669"/>
    <property type="project" value="UniProtKB-UniRule"/>
</dbReference>
<dbReference type="GO" id="GO:0043137">
    <property type="term" value="P:DNA replication, removal of RNA primer"/>
    <property type="evidence" value="ECO:0007669"/>
    <property type="project" value="TreeGrafter"/>
</dbReference>
<dbReference type="GO" id="GO:0006298">
    <property type="term" value="P:mismatch repair"/>
    <property type="evidence" value="ECO:0007669"/>
    <property type="project" value="TreeGrafter"/>
</dbReference>
<dbReference type="CDD" id="cd07182">
    <property type="entry name" value="RNase_HII_bacteria_HII_like"/>
    <property type="match status" value="1"/>
</dbReference>
<dbReference type="Gene3D" id="3.30.420.10">
    <property type="entry name" value="Ribonuclease H-like superfamily/Ribonuclease H"/>
    <property type="match status" value="1"/>
</dbReference>
<dbReference type="HAMAP" id="MF_00052_B">
    <property type="entry name" value="RNase_HII_B"/>
    <property type="match status" value="1"/>
</dbReference>
<dbReference type="InterPro" id="IPR022898">
    <property type="entry name" value="RNase_HII"/>
</dbReference>
<dbReference type="InterPro" id="IPR001352">
    <property type="entry name" value="RNase_HII/HIII"/>
</dbReference>
<dbReference type="InterPro" id="IPR024567">
    <property type="entry name" value="RNase_HII/HIII_dom"/>
</dbReference>
<dbReference type="InterPro" id="IPR012337">
    <property type="entry name" value="RNaseH-like_sf"/>
</dbReference>
<dbReference type="InterPro" id="IPR036397">
    <property type="entry name" value="RNaseH_sf"/>
</dbReference>
<dbReference type="NCBIfam" id="NF000595">
    <property type="entry name" value="PRK00015.1-3"/>
    <property type="match status" value="1"/>
</dbReference>
<dbReference type="PANTHER" id="PTHR10954:SF23">
    <property type="entry name" value="RIBONUCLEASE"/>
    <property type="match status" value="1"/>
</dbReference>
<dbReference type="PANTHER" id="PTHR10954">
    <property type="entry name" value="RIBONUCLEASE H2 SUBUNIT A"/>
    <property type="match status" value="1"/>
</dbReference>
<dbReference type="Pfam" id="PF01351">
    <property type="entry name" value="RNase_HII"/>
    <property type="match status" value="1"/>
</dbReference>
<dbReference type="SUPFAM" id="SSF53098">
    <property type="entry name" value="Ribonuclease H-like"/>
    <property type="match status" value="1"/>
</dbReference>
<dbReference type="PROSITE" id="PS51975">
    <property type="entry name" value="RNASE_H_2"/>
    <property type="match status" value="1"/>
</dbReference>
<feature type="chain" id="PRO_1000091606" description="Ribonuclease HII">
    <location>
        <begin position="1"/>
        <end position="181"/>
    </location>
</feature>
<feature type="domain" description="RNase H type-2" evidence="2">
    <location>
        <begin position="1"/>
        <end position="181"/>
    </location>
</feature>
<feature type="binding site" evidence="1">
    <location>
        <position position="6"/>
    </location>
    <ligand>
        <name>a divalent metal cation</name>
        <dbReference type="ChEBI" id="CHEBI:60240"/>
    </ligand>
</feature>
<feature type="binding site" evidence="1">
    <location>
        <position position="7"/>
    </location>
    <ligand>
        <name>a divalent metal cation</name>
        <dbReference type="ChEBI" id="CHEBI:60240"/>
    </ligand>
</feature>
<feature type="binding site" evidence="1">
    <location>
        <position position="98"/>
    </location>
    <ligand>
        <name>a divalent metal cation</name>
        <dbReference type="ChEBI" id="CHEBI:60240"/>
    </ligand>
</feature>
<comment type="function">
    <text evidence="1">Endonuclease that specifically degrades the RNA of RNA-DNA hybrids.</text>
</comment>
<comment type="catalytic activity">
    <reaction evidence="1">
        <text>Endonucleolytic cleavage to 5'-phosphomonoester.</text>
        <dbReference type="EC" id="3.1.26.4"/>
    </reaction>
</comment>
<comment type="cofactor">
    <cofactor evidence="1">
        <name>Mn(2+)</name>
        <dbReference type="ChEBI" id="CHEBI:29035"/>
    </cofactor>
    <cofactor evidence="1">
        <name>Mg(2+)</name>
        <dbReference type="ChEBI" id="CHEBI:18420"/>
    </cofactor>
    <text evidence="1">Manganese or magnesium. Binds 1 divalent metal ion per monomer in the absence of substrate. May bind a second metal ion after substrate binding.</text>
</comment>
<comment type="subcellular location">
    <subcellularLocation>
        <location evidence="1">Cytoplasm</location>
    </subcellularLocation>
</comment>
<comment type="similarity">
    <text evidence="1">Belongs to the RNase HII family.</text>
</comment>